<name>DNAJ_CAMJE</name>
<reference key="1">
    <citation type="journal article" date="1998" name="Infect. Immun.">
        <title>Characterization of the thermal stress response of Campylobacter jejuni.</title>
        <authorList>
            <person name="Konkel M.E."/>
            <person name="Kim B.J."/>
            <person name="Klena J.D."/>
            <person name="Young C.R."/>
            <person name="Ziprin R."/>
        </authorList>
    </citation>
    <scope>NUCLEOTIDE SEQUENCE [GENOMIC DNA]</scope>
    <source>
        <strain>F38011</strain>
    </source>
</reference>
<reference key="2">
    <citation type="submission" date="1998-03" db="EMBL/GenBank/DDBJ databases">
        <title>Characterization of the RacR regulon of Campylobacter jejuni.</title>
        <authorList>
            <person name="Bras A.M."/>
            <person name="Wren B.W."/>
            <person name="Ketley J.M."/>
        </authorList>
    </citation>
    <scope>NUCLEOTIDE SEQUENCE [GENOMIC DNA]</scope>
</reference>
<reference key="3">
    <citation type="journal article" date="2000" name="Nature">
        <title>The genome sequence of the food-borne pathogen Campylobacter jejuni reveals hypervariable sequences.</title>
        <authorList>
            <person name="Parkhill J."/>
            <person name="Wren B.W."/>
            <person name="Mungall K.L."/>
            <person name="Ketley J.M."/>
            <person name="Churcher C.M."/>
            <person name="Basham D."/>
            <person name="Chillingworth T."/>
            <person name="Davies R.M."/>
            <person name="Feltwell T."/>
            <person name="Holroyd S."/>
            <person name="Jagels K."/>
            <person name="Karlyshev A.V."/>
            <person name="Moule S."/>
            <person name="Pallen M.J."/>
            <person name="Penn C.W."/>
            <person name="Quail M.A."/>
            <person name="Rajandream M.A."/>
            <person name="Rutherford K.M."/>
            <person name="van Vliet A.H.M."/>
            <person name="Whitehead S."/>
            <person name="Barrell B.G."/>
        </authorList>
    </citation>
    <scope>NUCLEOTIDE SEQUENCE [LARGE SCALE GENOMIC DNA]</scope>
    <source>
        <strain>ATCC 700819 / NCTC 11168</strain>
    </source>
</reference>
<accession>O85213</accession>
<accession>O68797</accession>
<accession>Q0P8Z6</accession>
<accession>Q9PN37</accession>
<proteinExistence type="inferred from homology"/>
<sequence>MEISYYEILEITQNADKETIKKAYRKMALKYHPDRNQGDKEAEDKFKLVNEAYEVLSNDEKRAIYDRYGKDALKGGGFGSSSSGFGGFEDLGDIFSSFFGEGFGSSRRRKSSNDEKIPSDFIVNLKLSFKEAVFGCKKNIDFTYKCSCKTCNGTGAKDGKLQTCPKCQGRGQVGVSQGFITFAQTCPDCQGIGEKASEKCSDCKGLGYNESKDSVELNIPEGVDTGMKLRVNAKGNILKNGTRGDMYVKIIAAEDDTFIRDDDDIYIEFPVFFTQAILGESIKVPTIRGEATLNLPKGAKDGQRFVLEKEGVKDVHSSRMGNQIVQISIKFPTSLNDEQKELLEKLSESFGIKDGMHQEQKGLFEKITNWFKS</sequence>
<feature type="chain" id="PRO_0000070751" description="Chaperone protein DnaJ">
    <location>
        <begin position="1"/>
        <end position="373"/>
    </location>
</feature>
<feature type="domain" description="J" evidence="1">
    <location>
        <begin position="4"/>
        <end position="69"/>
    </location>
</feature>
<feature type="repeat" description="CXXCXGXG motif">
    <location>
        <begin position="148"/>
        <end position="155"/>
    </location>
</feature>
<feature type="repeat" description="CXXCXGXG motif">
    <location>
        <begin position="164"/>
        <end position="171"/>
    </location>
</feature>
<feature type="repeat" description="CXXCXGXG motif">
    <location>
        <begin position="186"/>
        <end position="193"/>
    </location>
</feature>
<feature type="repeat" description="CXXCXGXG motif">
    <location>
        <begin position="200"/>
        <end position="207"/>
    </location>
</feature>
<feature type="zinc finger region" description="CR-type" evidence="1">
    <location>
        <begin position="135"/>
        <end position="212"/>
    </location>
</feature>
<feature type="binding site" evidence="1">
    <location>
        <position position="148"/>
    </location>
    <ligand>
        <name>Zn(2+)</name>
        <dbReference type="ChEBI" id="CHEBI:29105"/>
        <label>1</label>
    </ligand>
</feature>
<feature type="binding site" evidence="1">
    <location>
        <position position="151"/>
    </location>
    <ligand>
        <name>Zn(2+)</name>
        <dbReference type="ChEBI" id="CHEBI:29105"/>
        <label>1</label>
    </ligand>
</feature>
<feature type="binding site" evidence="1">
    <location>
        <position position="164"/>
    </location>
    <ligand>
        <name>Zn(2+)</name>
        <dbReference type="ChEBI" id="CHEBI:29105"/>
        <label>2</label>
    </ligand>
</feature>
<feature type="binding site" evidence="1">
    <location>
        <position position="167"/>
    </location>
    <ligand>
        <name>Zn(2+)</name>
        <dbReference type="ChEBI" id="CHEBI:29105"/>
        <label>2</label>
    </ligand>
</feature>
<feature type="binding site" evidence="1">
    <location>
        <position position="186"/>
    </location>
    <ligand>
        <name>Zn(2+)</name>
        <dbReference type="ChEBI" id="CHEBI:29105"/>
        <label>2</label>
    </ligand>
</feature>
<feature type="binding site" evidence="1">
    <location>
        <position position="189"/>
    </location>
    <ligand>
        <name>Zn(2+)</name>
        <dbReference type="ChEBI" id="CHEBI:29105"/>
        <label>2</label>
    </ligand>
</feature>
<feature type="binding site" evidence="1">
    <location>
        <position position="200"/>
    </location>
    <ligand>
        <name>Zn(2+)</name>
        <dbReference type="ChEBI" id="CHEBI:29105"/>
        <label>1</label>
    </ligand>
</feature>
<feature type="binding site" evidence="1">
    <location>
        <position position="203"/>
    </location>
    <ligand>
        <name>Zn(2+)</name>
        <dbReference type="ChEBI" id="CHEBI:29105"/>
        <label>1</label>
    </ligand>
</feature>
<feature type="sequence conflict" description="In Ref. 2; AAC08023." evidence="2" ref="2">
    <original>S</original>
    <variation>T</variation>
    <location>
        <position position="57"/>
    </location>
</feature>
<feature type="sequence conflict" description="In Ref. 1; AAC32328." evidence="2" ref="1">
    <original>DA</original>
    <variation>M</variation>
    <location>
        <begin position="71"/>
        <end position="72"/>
    </location>
</feature>
<feature type="sequence conflict" description="In Ref. 2; AAC08023." evidence="2" ref="2">
    <original>G</original>
    <variation>A</variation>
    <location>
        <position position="86"/>
    </location>
</feature>
<feature type="sequence conflict" description="In Ref. 2; AAC08023." evidence="2" ref="2">
    <original>S</original>
    <variation>T</variation>
    <location>
        <position position="211"/>
    </location>
</feature>
<feature type="sequence conflict" description="In Ref. 2; AAC08023." evidence="2" ref="2">
    <original>M</original>
    <variation>I</variation>
    <location>
        <position position="320"/>
    </location>
</feature>
<feature type="sequence conflict" description="In Ref. 2; AAC08023." evidence="2" ref="2">
    <original>S</original>
    <variation>F</variation>
    <location>
        <position position="334"/>
    </location>
</feature>
<feature type="sequence conflict" description="In Ref. 2; AAC08023." evidence="2" ref="2">
    <original>E</original>
    <variation>D</variation>
    <location>
        <position position="359"/>
    </location>
</feature>
<feature type="sequence conflict" description="In Ref. 2; AAC08023." evidence="2" ref="2">
    <original>T</original>
    <variation>A</variation>
    <location>
        <position position="368"/>
    </location>
</feature>
<organism>
    <name type="scientific">Campylobacter jejuni subsp. jejuni serotype O:2 (strain ATCC 700819 / NCTC 11168)</name>
    <dbReference type="NCBI Taxonomy" id="192222"/>
    <lineage>
        <taxon>Bacteria</taxon>
        <taxon>Pseudomonadati</taxon>
        <taxon>Campylobacterota</taxon>
        <taxon>Epsilonproteobacteria</taxon>
        <taxon>Campylobacterales</taxon>
        <taxon>Campylobacteraceae</taxon>
        <taxon>Campylobacter</taxon>
    </lineage>
</organism>
<dbReference type="EMBL" id="AF052661">
    <property type="protein sequence ID" value="AAC32328.1"/>
    <property type="molecule type" value="Genomic_DNA"/>
</dbReference>
<dbReference type="EMBL" id="AF053962">
    <property type="protein sequence ID" value="AAC08023.1"/>
    <property type="status" value="ALT_FRAME"/>
    <property type="molecule type" value="Genomic_DNA"/>
</dbReference>
<dbReference type="EMBL" id="AL111168">
    <property type="protein sequence ID" value="CAL35375.1"/>
    <property type="molecule type" value="Genomic_DNA"/>
</dbReference>
<dbReference type="PIR" id="F81333">
    <property type="entry name" value="F81333"/>
</dbReference>
<dbReference type="PIR" id="T48660">
    <property type="entry name" value="T48660"/>
</dbReference>
<dbReference type="RefSeq" id="WP_002853203.1">
    <property type="nucleotide sequence ID" value="NZ_SZUC01000001.1"/>
</dbReference>
<dbReference type="RefSeq" id="YP_002344651.1">
    <property type="nucleotide sequence ID" value="NC_002163.1"/>
</dbReference>
<dbReference type="SMR" id="O85213"/>
<dbReference type="IntAct" id="O85213">
    <property type="interactions" value="28"/>
</dbReference>
<dbReference type="STRING" id="192222.Cj1260c"/>
<dbReference type="PaxDb" id="192222-Cj1260c"/>
<dbReference type="EnsemblBacteria" id="CAL35375">
    <property type="protein sequence ID" value="CAL35375"/>
    <property type="gene ID" value="Cj1260c"/>
</dbReference>
<dbReference type="GeneID" id="905551"/>
<dbReference type="KEGG" id="cje:Cj1260c"/>
<dbReference type="PATRIC" id="fig|192222.6.peg.1243"/>
<dbReference type="eggNOG" id="COG0484">
    <property type="taxonomic scope" value="Bacteria"/>
</dbReference>
<dbReference type="HOGENOM" id="CLU_017633_0_7_7"/>
<dbReference type="OrthoDB" id="9779889at2"/>
<dbReference type="Proteomes" id="UP000000799">
    <property type="component" value="Chromosome"/>
</dbReference>
<dbReference type="GO" id="GO:0005737">
    <property type="term" value="C:cytoplasm"/>
    <property type="evidence" value="ECO:0007669"/>
    <property type="project" value="UniProtKB-SubCell"/>
</dbReference>
<dbReference type="GO" id="GO:0005524">
    <property type="term" value="F:ATP binding"/>
    <property type="evidence" value="ECO:0007669"/>
    <property type="project" value="InterPro"/>
</dbReference>
<dbReference type="GO" id="GO:0031072">
    <property type="term" value="F:heat shock protein binding"/>
    <property type="evidence" value="ECO:0007669"/>
    <property type="project" value="InterPro"/>
</dbReference>
<dbReference type="GO" id="GO:0051082">
    <property type="term" value="F:unfolded protein binding"/>
    <property type="evidence" value="ECO:0007669"/>
    <property type="project" value="UniProtKB-UniRule"/>
</dbReference>
<dbReference type="GO" id="GO:0008270">
    <property type="term" value="F:zinc ion binding"/>
    <property type="evidence" value="ECO:0007669"/>
    <property type="project" value="UniProtKB-UniRule"/>
</dbReference>
<dbReference type="GO" id="GO:0051085">
    <property type="term" value="P:chaperone cofactor-dependent protein refolding"/>
    <property type="evidence" value="ECO:0007669"/>
    <property type="project" value="TreeGrafter"/>
</dbReference>
<dbReference type="GO" id="GO:0006260">
    <property type="term" value="P:DNA replication"/>
    <property type="evidence" value="ECO:0007669"/>
    <property type="project" value="UniProtKB-KW"/>
</dbReference>
<dbReference type="GO" id="GO:0042026">
    <property type="term" value="P:protein refolding"/>
    <property type="evidence" value="ECO:0007669"/>
    <property type="project" value="TreeGrafter"/>
</dbReference>
<dbReference type="GO" id="GO:0009408">
    <property type="term" value="P:response to heat"/>
    <property type="evidence" value="ECO:0007669"/>
    <property type="project" value="InterPro"/>
</dbReference>
<dbReference type="CDD" id="cd06257">
    <property type="entry name" value="DnaJ"/>
    <property type="match status" value="1"/>
</dbReference>
<dbReference type="CDD" id="cd10747">
    <property type="entry name" value="DnaJ_C"/>
    <property type="match status" value="1"/>
</dbReference>
<dbReference type="CDD" id="cd10719">
    <property type="entry name" value="DnaJ_zf"/>
    <property type="match status" value="1"/>
</dbReference>
<dbReference type="FunFam" id="1.10.287.110:FF:000034">
    <property type="entry name" value="Chaperone protein DnaJ"/>
    <property type="match status" value="1"/>
</dbReference>
<dbReference type="FunFam" id="2.60.260.20:FF:000055">
    <property type="entry name" value="Chaperone protein DnaJ"/>
    <property type="match status" value="1"/>
</dbReference>
<dbReference type="FunFam" id="2.10.230.10:FF:000002">
    <property type="entry name" value="Molecular chaperone DnaJ"/>
    <property type="match status" value="1"/>
</dbReference>
<dbReference type="Gene3D" id="1.10.287.110">
    <property type="entry name" value="DnaJ domain"/>
    <property type="match status" value="1"/>
</dbReference>
<dbReference type="Gene3D" id="2.10.230.10">
    <property type="entry name" value="Heat shock protein DnaJ, cysteine-rich domain"/>
    <property type="match status" value="1"/>
</dbReference>
<dbReference type="Gene3D" id="2.60.260.20">
    <property type="entry name" value="Urease metallochaperone UreE, N-terminal domain"/>
    <property type="match status" value="2"/>
</dbReference>
<dbReference type="HAMAP" id="MF_01152">
    <property type="entry name" value="DnaJ"/>
    <property type="match status" value="1"/>
</dbReference>
<dbReference type="InterPro" id="IPR012724">
    <property type="entry name" value="DnaJ"/>
</dbReference>
<dbReference type="InterPro" id="IPR002939">
    <property type="entry name" value="DnaJ_C"/>
</dbReference>
<dbReference type="InterPro" id="IPR001623">
    <property type="entry name" value="DnaJ_domain"/>
</dbReference>
<dbReference type="InterPro" id="IPR018253">
    <property type="entry name" value="DnaJ_domain_CS"/>
</dbReference>
<dbReference type="InterPro" id="IPR008971">
    <property type="entry name" value="HSP40/DnaJ_pept-bd"/>
</dbReference>
<dbReference type="InterPro" id="IPR001305">
    <property type="entry name" value="HSP_DnaJ_Cys-rich_dom"/>
</dbReference>
<dbReference type="InterPro" id="IPR036410">
    <property type="entry name" value="HSP_DnaJ_Cys-rich_dom_sf"/>
</dbReference>
<dbReference type="InterPro" id="IPR036869">
    <property type="entry name" value="J_dom_sf"/>
</dbReference>
<dbReference type="NCBIfam" id="TIGR02349">
    <property type="entry name" value="DnaJ_bact"/>
    <property type="match status" value="1"/>
</dbReference>
<dbReference type="NCBIfam" id="NF008035">
    <property type="entry name" value="PRK10767.1"/>
    <property type="match status" value="1"/>
</dbReference>
<dbReference type="PANTHER" id="PTHR43096:SF48">
    <property type="entry name" value="CHAPERONE PROTEIN DNAJ"/>
    <property type="match status" value="1"/>
</dbReference>
<dbReference type="PANTHER" id="PTHR43096">
    <property type="entry name" value="DNAJ HOMOLOG 1, MITOCHONDRIAL-RELATED"/>
    <property type="match status" value="1"/>
</dbReference>
<dbReference type="Pfam" id="PF00226">
    <property type="entry name" value="DnaJ"/>
    <property type="match status" value="1"/>
</dbReference>
<dbReference type="Pfam" id="PF01556">
    <property type="entry name" value="DnaJ_C"/>
    <property type="match status" value="1"/>
</dbReference>
<dbReference type="Pfam" id="PF00684">
    <property type="entry name" value="DnaJ_CXXCXGXG"/>
    <property type="match status" value="1"/>
</dbReference>
<dbReference type="PRINTS" id="PR00625">
    <property type="entry name" value="JDOMAIN"/>
</dbReference>
<dbReference type="SMART" id="SM00271">
    <property type="entry name" value="DnaJ"/>
    <property type="match status" value="1"/>
</dbReference>
<dbReference type="SUPFAM" id="SSF46565">
    <property type="entry name" value="Chaperone J-domain"/>
    <property type="match status" value="1"/>
</dbReference>
<dbReference type="SUPFAM" id="SSF57938">
    <property type="entry name" value="DnaJ/Hsp40 cysteine-rich domain"/>
    <property type="match status" value="1"/>
</dbReference>
<dbReference type="SUPFAM" id="SSF49493">
    <property type="entry name" value="HSP40/DnaJ peptide-binding domain"/>
    <property type="match status" value="2"/>
</dbReference>
<dbReference type="PROSITE" id="PS00636">
    <property type="entry name" value="DNAJ_1"/>
    <property type="match status" value="1"/>
</dbReference>
<dbReference type="PROSITE" id="PS50076">
    <property type="entry name" value="DNAJ_2"/>
    <property type="match status" value="1"/>
</dbReference>
<dbReference type="PROSITE" id="PS51188">
    <property type="entry name" value="ZF_CR"/>
    <property type="match status" value="1"/>
</dbReference>
<comment type="function">
    <text evidence="1">Participates actively in the response to hyperosmotic and heat shock by preventing the aggregation of stress-denatured proteins and by disaggregating proteins, also in an autonomous, DnaK-independent fashion. Unfolded proteins bind initially to DnaJ; upon interaction with the DnaJ-bound protein, DnaK hydrolyzes its bound ATP, resulting in the formation of a stable complex. GrpE releases ADP from DnaK; ATP binding to DnaK triggers the release of the substrate protein, thus completing the reaction cycle. Several rounds of ATP-dependent interactions between DnaJ, DnaK and GrpE are required for fully efficient folding. Also involved, together with DnaK and GrpE, in the DNA replication of plasmids through activation of initiation proteins.</text>
</comment>
<comment type="cofactor">
    <cofactor evidence="1">
        <name>Zn(2+)</name>
        <dbReference type="ChEBI" id="CHEBI:29105"/>
    </cofactor>
    <text evidence="1">Binds 2 Zn(2+) ions per monomer.</text>
</comment>
<comment type="subunit">
    <text evidence="1">Homodimer.</text>
</comment>
<comment type="subcellular location">
    <subcellularLocation>
        <location evidence="1">Cytoplasm</location>
    </subcellularLocation>
</comment>
<comment type="domain">
    <text evidence="1">The J domain is necessary and sufficient to stimulate DnaK ATPase activity. Zinc center 1 plays an important role in the autonomous, DnaK-independent chaperone activity of DnaJ. Zinc center 2 is essential for interaction with DnaK and for DnaJ activity.</text>
</comment>
<comment type="similarity">
    <text evidence="1">Belongs to the DnaJ family.</text>
</comment>
<comment type="sequence caution" evidence="2">
    <conflict type="frameshift">
        <sequence resource="EMBL-CDS" id="AAC08023"/>
    </conflict>
</comment>
<gene>
    <name evidence="1" type="primary">dnaJ</name>
    <name type="ordered locus">Cj1260c</name>
</gene>
<evidence type="ECO:0000255" key="1">
    <source>
        <dbReference type="HAMAP-Rule" id="MF_01152"/>
    </source>
</evidence>
<evidence type="ECO:0000305" key="2"/>
<keyword id="KW-0143">Chaperone</keyword>
<keyword id="KW-0963">Cytoplasm</keyword>
<keyword id="KW-0235">DNA replication</keyword>
<keyword id="KW-0479">Metal-binding</keyword>
<keyword id="KW-1185">Reference proteome</keyword>
<keyword id="KW-0677">Repeat</keyword>
<keyword id="KW-0346">Stress response</keyword>
<keyword id="KW-0862">Zinc</keyword>
<keyword id="KW-0863">Zinc-finger</keyword>
<protein>
    <recommendedName>
        <fullName evidence="1">Chaperone protein DnaJ</fullName>
    </recommendedName>
</protein>